<organism>
    <name type="scientific">Aliivibrio salmonicida (strain LFI1238)</name>
    <name type="common">Vibrio salmonicida (strain LFI1238)</name>
    <dbReference type="NCBI Taxonomy" id="316275"/>
    <lineage>
        <taxon>Bacteria</taxon>
        <taxon>Pseudomonadati</taxon>
        <taxon>Pseudomonadota</taxon>
        <taxon>Gammaproteobacteria</taxon>
        <taxon>Vibrionales</taxon>
        <taxon>Vibrionaceae</taxon>
        <taxon>Aliivibrio</taxon>
    </lineage>
</organism>
<comment type="similarity">
    <text evidence="1">Belongs to the UPF0319 family.</text>
</comment>
<keyword id="KW-0732">Signal</keyword>
<gene>
    <name type="ordered locus">VSAL_I2129</name>
</gene>
<name>Y2129_ALISL</name>
<protein>
    <recommendedName>
        <fullName evidence="1">UPF0319 protein VSAL_I2129</fullName>
    </recommendedName>
</protein>
<accession>B6EI75</accession>
<evidence type="ECO:0000255" key="1">
    <source>
        <dbReference type="HAMAP-Rule" id="MF_00789"/>
    </source>
</evidence>
<dbReference type="EMBL" id="FM178379">
    <property type="protein sequence ID" value="CAQ79814.1"/>
    <property type="molecule type" value="Genomic_DNA"/>
</dbReference>
<dbReference type="RefSeq" id="WP_012550655.1">
    <property type="nucleotide sequence ID" value="NC_011312.1"/>
</dbReference>
<dbReference type="SMR" id="B6EI75"/>
<dbReference type="KEGG" id="vsa:VSAL_I2129"/>
<dbReference type="eggNOG" id="COG3110">
    <property type="taxonomic scope" value="Bacteria"/>
</dbReference>
<dbReference type="HOGENOM" id="CLU_073782_1_0_6"/>
<dbReference type="Proteomes" id="UP000001730">
    <property type="component" value="Chromosome 1"/>
</dbReference>
<dbReference type="HAMAP" id="MF_00789">
    <property type="entry name" value="UPF0319"/>
    <property type="match status" value="1"/>
</dbReference>
<dbReference type="InterPro" id="IPR018635">
    <property type="entry name" value="UPF0319"/>
</dbReference>
<dbReference type="PANTHER" id="PTHR38108">
    <property type="entry name" value="UPF0319 PROTEIN YCCT"/>
    <property type="match status" value="1"/>
</dbReference>
<dbReference type="PANTHER" id="PTHR38108:SF1">
    <property type="entry name" value="UPF0319 PROTEIN YCCT"/>
    <property type="match status" value="1"/>
</dbReference>
<dbReference type="Pfam" id="PF09829">
    <property type="entry name" value="DUF2057"/>
    <property type="match status" value="1"/>
</dbReference>
<feature type="signal peptide" evidence="1">
    <location>
        <begin position="1"/>
        <end position="21"/>
    </location>
</feature>
<feature type="chain" id="PRO_5000405782" description="UPF0319 protein VSAL_I2129">
    <location>
        <begin position="22"/>
        <end position="208"/>
    </location>
</feature>
<sequence>MKFHSFLAAGLCLLTSLSASASIQLTVPSEVELLLVDSQEVKLDSSFFSTTSTLKLDDGEHQIVFRYNPVFKQGKDNIIVSSDIIVSKFTATNQDISFVFPSYNSPEKAKAFNTDLNWELKDQNDKNIPFAQAKLVYDGVQIGHNIQFELAKFNTTEHVAAFKQDMITVTHKEIKNEKGENTAEQMLNYWYEKADKETQERFKTSISN</sequence>
<proteinExistence type="inferred from homology"/>
<reference key="1">
    <citation type="journal article" date="2008" name="BMC Genomics">
        <title>The genome sequence of the fish pathogen Aliivibrio salmonicida strain LFI1238 shows extensive evidence of gene decay.</title>
        <authorList>
            <person name="Hjerde E."/>
            <person name="Lorentzen M.S."/>
            <person name="Holden M.T."/>
            <person name="Seeger K."/>
            <person name="Paulsen S."/>
            <person name="Bason N."/>
            <person name="Churcher C."/>
            <person name="Harris D."/>
            <person name="Norbertczak H."/>
            <person name="Quail M.A."/>
            <person name="Sanders S."/>
            <person name="Thurston S."/>
            <person name="Parkhill J."/>
            <person name="Willassen N.P."/>
            <person name="Thomson N.R."/>
        </authorList>
    </citation>
    <scope>NUCLEOTIDE SEQUENCE [LARGE SCALE GENOMIC DNA]</scope>
    <source>
        <strain>LFI1238</strain>
    </source>
</reference>